<sequence>MRAAAISMPRLNKMPGMFFSASPKDSKEHSHSLLDDKKQKKRPKTFGMDVKTYLRSMIPHLESGMKSAKSKDILSAEEVMQWSQSLEKLLANQTGQNVFGRFLKSEFSEENIEFWLACEDYKKTETDLLHNKAENIYKAFVHSDAVKQINIDFHTRESTAKKIKTPTPTSFDEAQKVIYSLMEKDSYPRFLKSNIYLNLLNDLQANTLK</sequence>
<organism>
    <name type="scientific">Mus musculus</name>
    <name type="common">Mouse</name>
    <dbReference type="NCBI Taxonomy" id="10090"/>
    <lineage>
        <taxon>Eukaryota</taxon>
        <taxon>Metazoa</taxon>
        <taxon>Chordata</taxon>
        <taxon>Craniata</taxon>
        <taxon>Vertebrata</taxon>
        <taxon>Euteleostomi</taxon>
        <taxon>Mammalia</taxon>
        <taxon>Eutheria</taxon>
        <taxon>Euarchontoglires</taxon>
        <taxon>Glires</taxon>
        <taxon>Rodentia</taxon>
        <taxon>Myomorpha</taxon>
        <taxon>Muroidea</taxon>
        <taxon>Muridae</taxon>
        <taxon>Murinae</taxon>
        <taxon>Mus</taxon>
        <taxon>Mus</taxon>
    </lineage>
</organism>
<accession>Q9JL25</accession>
<accession>Q3TBD1</accession>
<accession>Q3TC18</accession>
<accession>Q3TD56</accession>
<accession>Q3U477</accession>
<feature type="chain" id="PRO_0000204176" description="Regulator of G-protein signaling 1">
    <location>
        <begin position="1"/>
        <end position="209"/>
    </location>
</feature>
<feature type="domain" description="RGS" evidence="2">
    <location>
        <begin position="85"/>
        <end position="200"/>
    </location>
</feature>
<feature type="region of interest" description="Disordered" evidence="3">
    <location>
        <begin position="19"/>
        <end position="42"/>
    </location>
</feature>
<feature type="compositionally biased region" description="Basic and acidic residues" evidence="3">
    <location>
        <begin position="24"/>
        <end position="38"/>
    </location>
</feature>
<feature type="splice variant" id="VSP_036732" description="In isoform 2." evidence="5">
    <location>
        <begin position="1"/>
        <end position="47"/>
    </location>
</feature>
<feature type="sequence conflict" description="In Ref. 1; BAE42139/BAE32557." evidence="6" ref="1">
    <original>N</original>
    <variation>D</variation>
    <location>
        <position position="12"/>
    </location>
</feature>
<feature type="sequence conflict" description="In Ref. 1; BAE42139/BAE32557/BAE42382." evidence="6" ref="1">
    <original>I</original>
    <variation>M</variation>
    <location>
        <position position="73"/>
    </location>
</feature>
<feature type="sequence conflict" description="In Ref. 1; BAE42139/BAE32557/BAE42382." evidence="6" ref="1">
    <original>R</original>
    <variation>K</variation>
    <location>
        <position position="101"/>
    </location>
</feature>
<feature type="sequence conflict" description="In Ref. 1; BAE32557." evidence="6" ref="1">
    <original>Y</original>
    <variation>C</variation>
    <location>
        <position position="121"/>
    </location>
</feature>
<gene>
    <name type="primary">Rgs1</name>
</gene>
<keyword id="KW-0025">Alternative splicing</keyword>
<keyword id="KW-1003">Cell membrane</keyword>
<keyword id="KW-0963">Cytoplasm</keyword>
<keyword id="KW-0343">GTPase activation</keyword>
<keyword id="KW-0472">Membrane</keyword>
<keyword id="KW-1185">Reference proteome</keyword>
<keyword id="KW-0734">Signal transduction inhibitor</keyword>
<reference key="1">
    <citation type="journal article" date="2005" name="Science">
        <title>The transcriptional landscape of the mammalian genome.</title>
        <authorList>
            <person name="Carninci P."/>
            <person name="Kasukawa T."/>
            <person name="Katayama S."/>
            <person name="Gough J."/>
            <person name="Frith M.C."/>
            <person name="Maeda N."/>
            <person name="Oyama R."/>
            <person name="Ravasi T."/>
            <person name="Lenhard B."/>
            <person name="Wells C."/>
            <person name="Kodzius R."/>
            <person name="Shimokawa K."/>
            <person name="Bajic V.B."/>
            <person name="Brenner S.E."/>
            <person name="Batalov S."/>
            <person name="Forrest A.R."/>
            <person name="Zavolan M."/>
            <person name="Davis M.J."/>
            <person name="Wilming L.G."/>
            <person name="Aidinis V."/>
            <person name="Allen J.E."/>
            <person name="Ambesi-Impiombato A."/>
            <person name="Apweiler R."/>
            <person name="Aturaliya R.N."/>
            <person name="Bailey T.L."/>
            <person name="Bansal M."/>
            <person name="Baxter L."/>
            <person name="Beisel K.W."/>
            <person name="Bersano T."/>
            <person name="Bono H."/>
            <person name="Chalk A.M."/>
            <person name="Chiu K.P."/>
            <person name="Choudhary V."/>
            <person name="Christoffels A."/>
            <person name="Clutterbuck D.R."/>
            <person name="Crowe M.L."/>
            <person name="Dalla E."/>
            <person name="Dalrymple B.P."/>
            <person name="de Bono B."/>
            <person name="Della Gatta G."/>
            <person name="di Bernardo D."/>
            <person name="Down T."/>
            <person name="Engstrom P."/>
            <person name="Fagiolini M."/>
            <person name="Faulkner G."/>
            <person name="Fletcher C.F."/>
            <person name="Fukushima T."/>
            <person name="Furuno M."/>
            <person name="Futaki S."/>
            <person name="Gariboldi M."/>
            <person name="Georgii-Hemming P."/>
            <person name="Gingeras T.R."/>
            <person name="Gojobori T."/>
            <person name="Green R.E."/>
            <person name="Gustincich S."/>
            <person name="Harbers M."/>
            <person name="Hayashi Y."/>
            <person name="Hensch T.K."/>
            <person name="Hirokawa N."/>
            <person name="Hill D."/>
            <person name="Huminiecki L."/>
            <person name="Iacono M."/>
            <person name="Ikeo K."/>
            <person name="Iwama A."/>
            <person name="Ishikawa T."/>
            <person name="Jakt M."/>
            <person name="Kanapin A."/>
            <person name="Katoh M."/>
            <person name="Kawasawa Y."/>
            <person name="Kelso J."/>
            <person name="Kitamura H."/>
            <person name="Kitano H."/>
            <person name="Kollias G."/>
            <person name="Krishnan S.P."/>
            <person name="Kruger A."/>
            <person name="Kummerfeld S.K."/>
            <person name="Kurochkin I.V."/>
            <person name="Lareau L.F."/>
            <person name="Lazarevic D."/>
            <person name="Lipovich L."/>
            <person name="Liu J."/>
            <person name="Liuni S."/>
            <person name="McWilliam S."/>
            <person name="Madan Babu M."/>
            <person name="Madera M."/>
            <person name="Marchionni L."/>
            <person name="Matsuda H."/>
            <person name="Matsuzawa S."/>
            <person name="Miki H."/>
            <person name="Mignone F."/>
            <person name="Miyake S."/>
            <person name="Morris K."/>
            <person name="Mottagui-Tabar S."/>
            <person name="Mulder N."/>
            <person name="Nakano N."/>
            <person name="Nakauchi H."/>
            <person name="Ng P."/>
            <person name="Nilsson R."/>
            <person name="Nishiguchi S."/>
            <person name="Nishikawa S."/>
            <person name="Nori F."/>
            <person name="Ohara O."/>
            <person name="Okazaki Y."/>
            <person name="Orlando V."/>
            <person name="Pang K.C."/>
            <person name="Pavan W.J."/>
            <person name="Pavesi G."/>
            <person name="Pesole G."/>
            <person name="Petrovsky N."/>
            <person name="Piazza S."/>
            <person name="Reed J."/>
            <person name="Reid J.F."/>
            <person name="Ring B.Z."/>
            <person name="Ringwald M."/>
            <person name="Rost B."/>
            <person name="Ruan Y."/>
            <person name="Salzberg S.L."/>
            <person name="Sandelin A."/>
            <person name="Schneider C."/>
            <person name="Schoenbach C."/>
            <person name="Sekiguchi K."/>
            <person name="Semple C.A."/>
            <person name="Seno S."/>
            <person name="Sessa L."/>
            <person name="Sheng Y."/>
            <person name="Shibata Y."/>
            <person name="Shimada H."/>
            <person name="Shimada K."/>
            <person name="Silva D."/>
            <person name="Sinclair B."/>
            <person name="Sperling S."/>
            <person name="Stupka E."/>
            <person name="Sugiura K."/>
            <person name="Sultana R."/>
            <person name="Takenaka Y."/>
            <person name="Taki K."/>
            <person name="Tammoja K."/>
            <person name="Tan S.L."/>
            <person name="Tang S."/>
            <person name="Taylor M.S."/>
            <person name="Tegner J."/>
            <person name="Teichmann S.A."/>
            <person name="Ueda H.R."/>
            <person name="van Nimwegen E."/>
            <person name="Verardo R."/>
            <person name="Wei C.L."/>
            <person name="Yagi K."/>
            <person name="Yamanishi H."/>
            <person name="Zabarovsky E."/>
            <person name="Zhu S."/>
            <person name="Zimmer A."/>
            <person name="Hide W."/>
            <person name="Bult C."/>
            <person name="Grimmond S.M."/>
            <person name="Teasdale R.D."/>
            <person name="Liu E.T."/>
            <person name="Brusic V."/>
            <person name="Quackenbush J."/>
            <person name="Wahlestedt C."/>
            <person name="Mattick J.S."/>
            <person name="Hume D.A."/>
            <person name="Kai C."/>
            <person name="Sasaki D."/>
            <person name="Tomaru Y."/>
            <person name="Fukuda S."/>
            <person name="Kanamori-Katayama M."/>
            <person name="Suzuki M."/>
            <person name="Aoki J."/>
            <person name="Arakawa T."/>
            <person name="Iida J."/>
            <person name="Imamura K."/>
            <person name="Itoh M."/>
            <person name="Kato T."/>
            <person name="Kawaji H."/>
            <person name="Kawagashira N."/>
            <person name="Kawashima T."/>
            <person name="Kojima M."/>
            <person name="Kondo S."/>
            <person name="Konno H."/>
            <person name="Nakano K."/>
            <person name="Ninomiya N."/>
            <person name="Nishio T."/>
            <person name="Okada M."/>
            <person name="Plessy C."/>
            <person name="Shibata K."/>
            <person name="Shiraki T."/>
            <person name="Suzuki S."/>
            <person name="Tagami M."/>
            <person name="Waki K."/>
            <person name="Watahiki A."/>
            <person name="Okamura-Oho Y."/>
            <person name="Suzuki H."/>
            <person name="Kawai J."/>
            <person name="Hayashizaki Y."/>
        </authorList>
    </citation>
    <scope>NUCLEOTIDE SEQUENCE [LARGE SCALE MRNA] (ISOFORMS 1 AND 2)</scope>
    <source>
        <strain>C57BL/6J</strain>
        <strain>NOD</strain>
        <tissue>Thymus</tissue>
    </source>
</reference>
<reference key="2">
    <citation type="journal article" date="2000" name="J. Immunol.">
        <title>RGS molecule expression in murine B lymphocytes and ability to down-regulate chemotaxis to lymphoid chemokines.</title>
        <authorList>
            <person name="Reif K."/>
            <person name="Cyster J.G."/>
        </authorList>
    </citation>
    <scope>NUCLEOTIDE SEQUENCE [MRNA] OF 2-209 (ISOFORM 1)</scope>
    <scope>FUNCTION</scope>
    <scope>TISSUE SPECIFICITY</scope>
    <source>
        <strain>C57BL/6J</strain>
        <tissue>Lymph node</tissue>
    </source>
</reference>
<reference key="3">
    <citation type="journal article" date="2004" name="Genome Res.">
        <title>The status, quality, and expansion of the NIH full-length cDNA project: the Mammalian Gene Collection (MGC).</title>
        <authorList>
            <consortium name="The MGC Project Team"/>
        </authorList>
    </citation>
    <scope>NUCLEOTIDE SEQUENCE [LARGE SCALE MRNA] OF 2-209 (ISOFORM 1)</scope>
    <source>
        <strain>C57BL/6J</strain>
        <tissue>Thymus</tissue>
    </source>
</reference>
<comment type="function">
    <text evidence="1 4">Regulates G protein-coupled receptor signaling cascades, including signaling downstream of the N-formylpeptide chemoattractant receptors and leukotriene receptors. Inhibits B cell chemotaxis toward CXCL12 (PubMed:10779778). Inhibits signal transduction by increasing the GTPase activity of G protein alpha subunits thereby driving them into their inactive GDP-bound form (By similarity).</text>
</comment>
<comment type="subunit">
    <text evidence="1">Interacts with GNAI1 and GNAQ.</text>
</comment>
<comment type="subcellular location">
    <subcellularLocation>
        <location evidence="1">Cell membrane</location>
        <topology evidence="1">Peripheral membrane protein</topology>
        <orientation evidence="1">Cytoplasmic side</orientation>
    </subcellularLocation>
    <subcellularLocation>
        <location evidence="1">Cytoplasm</location>
        <location evidence="1">Cytosol</location>
    </subcellularLocation>
</comment>
<comment type="alternative products">
    <event type="alternative splicing"/>
    <isoform>
        <id>Q9JL25-1</id>
        <name>1</name>
        <sequence type="displayed"/>
    </isoform>
    <isoform>
        <id>Q9JL25-2</id>
        <name>2</name>
        <sequence type="described" ref="VSP_036732"/>
    </isoform>
</comment>
<comment type="tissue specificity">
    <text evidence="4">Detected in spleen, lymph node and intestine.</text>
</comment>
<comment type="sequence caution" evidence="6">
    <conflict type="erroneous initiation">
        <sequence resource="EMBL-CDS" id="AAF34624"/>
    </conflict>
</comment>
<comment type="sequence caution" evidence="6">
    <conflict type="erroneous initiation">
        <sequence resource="EMBL-CDS" id="AAH28634"/>
    </conflict>
</comment>
<comment type="sequence caution" evidence="6">
    <conflict type="erroneous initiation">
        <sequence resource="EMBL-CDS" id="BAE23749"/>
    </conflict>
</comment>
<comment type="sequence caution" evidence="6">
    <conflict type="erroneous initiation">
        <sequence resource="EMBL-CDS" id="BAE32557"/>
    </conflict>
</comment>
<comment type="sequence caution" evidence="6">
    <conflict type="erroneous initiation">
        <sequence resource="EMBL-CDS" id="BAE41748"/>
    </conflict>
</comment>
<comment type="sequence caution" evidence="6">
    <conflict type="erroneous initiation">
        <sequence resource="EMBL-CDS" id="BAE42139"/>
    </conflict>
</comment>
<evidence type="ECO:0000250" key="1">
    <source>
        <dbReference type="UniProtKB" id="Q08116"/>
    </source>
</evidence>
<evidence type="ECO:0000255" key="2">
    <source>
        <dbReference type="PROSITE-ProRule" id="PRU00171"/>
    </source>
</evidence>
<evidence type="ECO:0000256" key="3">
    <source>
        <dbReference type="SAM" id="MobiDB-lite"/>
    </source>
</evidence>
<evidence type="ECO:0000269" key="4">
    <source>
    </source>
</evidence>
<evidence type="ECO:0000303" key="5">
    <source>
    </source>
</evidence>
<evidence type="ECO:0000305" key="6"/>
<dbReference type="EMBL" id="AK138688">
    <property type="protein sequence ID" value="BAE23749.1"/>
    <property type="status" value="ALT_INIT"/>
    <property type="molecule type" value="mRNA"/>
</dbReference>
<dbReference type="EMBL" id="AK154394">
    <property type="protein sequence ID" value="BAE32557.1"/>
    <property type="status" value="ALT_INIT"/>
    <property type="molecule type" value="mRNA"/>
</dbReference>
<dbReference type="EMBL" id="AK170366">
    <property type="protein sequence ID" value="BAE41748.1"/>
    <property type="status" value="ALT_INIT"/>
    <property type="molecule type" value="mRNA"/>
</dbReference>
<dbReference type="EMBL" id="AK170957">
    <property type="protein sequence ID" value="BAE42139.1"/>
    <property type="status" value="ALT_INIT"/>
    <property type="molecule type" value="mRNA"/>
</dbReference>
<dbReference type="EMBL" id="AK171306">
    <property type="protein sequence ID" value="BAE42382.1"/>
    <property type="molecule type" value="mRNA"/>
</dbReference>
<dbReference type="EMBL" id="AF215667">
    <property type="protein sequence ID" value="AAF34624.1"/>
    <property type="status" value="ALT_INIT"/>
    <property type="molecule type" value="mRNA"/>
</dbReference>
<dbReference type="EMBL" id="BC028634">
    <property type="protein sequence ID" value="AAH28634.1"/>
    <property type="status" value="ALT_INIT"/>
    <property type="molecule type" value="mRNA"/>
</dbReference>
<dbReference type="CCDS" id="CCDS15349.2">
    <molecule id="Q9JL25-1"/>
</dbReference>
<dbReference type="RefSeq" id="NP_056626.2">
    <molecule id="Q9JL25-1"/>
    <property type="nucleotide sequence ID" value="NM_015811.2"/>
</dbReference>
<dbReference type="SMR" id="Q9JL25"/>
<dbReference type="BioGRID" id="206110">
    <property type="interactions" value="1"/>
</dbReference>
<dbReference type="FunCoup" id="Q9JL25">
    <property type="interactions" value="318"/>
</dbReference>
<dbReference type="IntAct" id="Q9JL25">
    <property type="interactions" value="3"/>
</dbReference>
<dbReference type="STRING" id="10090.ENSMUSP00000140624"/>
<dbReference type="MoonDB" id="Q9JL25">
    <property type="type" value="Predicted"/>
</dbReference>
<dbReference type="iPTMnet" id="Q9JL25"/>
<dbReference type="PhosphoSitePlus" id="Q9JL25"/>
<dbReference type="PaxDb" id="10090-ENSMUSP00000140624"/>
<dbReference type="ProteomicsDB" id="253263">
    <molecule id="Q9JL25-1"/>
</dbReference>
<dbReference type="ProteomicsDB" id="253264">
    <molecule id="Q9JL25-2"/>
</dbReference>
<dbReference type="Antibodypedia" id="34458">
    <property type="antibodies" value="346 antibodies from 32 providers"/>
</dbReference>
<dbReference type="DNASU" id="50778"/>
<dbReference type="Ensembl" id="ENSMUST00000189061.7">
    <molecule id="Q9JL25-1"/>
    <property type="protein sequence ID" value="ENSMUSP00000140624.2"/>
    <property type="gene ID" value="ENSMUSG00000026358.14"/>
</dbReference>
<dbReference type="GeneID" id="50778"/>
<dbReference type="KEGG" id="mmu:50778"/>
<dbReference type="UCSC" id="uc007cxj.2">
    <molecule id="Q9JL25-1"/>
    <property type="organism name" value="mouse"/>
</dbReference>
<dbReference type="AGR" id="MGI:1354694"/>
<dbReference type="CTD" id="5996"/>
<dbReference type="MGI" id="MGI:1354694">
    <property type="gene designation" value="Rgs1"/>
</dbReference>
<dbReference type="VEuPathDB" id="HostDB:ENSMUSG00000026358"/>
<dbReference type="eggNOG" id="KOG3589">
    <property type="taxonomic scope" value="Eukaryota"/>
</dbReference>
<dbReference type="GeneTree" id="ENSGT00940000157316"/>
<dbReference type="HOGENOM" id="CLU_059863_3_3_1"/>
<dbReference type="InParanoid" id="Q9JL25"/>
<dbReference type="OMA" id="CMVPHIE"/>
<dbReference type="OrthoDB" id="196547at2759"/>
<dbReference type="PhylomeDB" id="Q9JL25"/>
<dbReference type="TreeFam" id="TF315837"/>
<dbReference type="Reactome" id="R-MMU-416476">
    <property type="pathway name" value="G alpha (q) signalling events"/>
</dbReference>
<dbReference type="Reactome" id="R-MMU-418594">
    <property type="pathway name" value="G alpha (i) signalling events"/>
</dbReference>
<dbReference type="BioGRID-ORCS" id="50778">
    <property type="hits" value="1 hit in 76 CRISPR screens"/>
</dbReference>
<dbReference type="ChiTaRS" id="Rgs1">
    <property type="organism name" value="mouse"/>
</dbReference>
<dbReference type="PRO" id="PR:Q9JL25"/>
<dbReference type="Proteomes" id="UP000000589">
    <property type="component" value="Chromosome 1"/>
</dbReference>
<dbReference type="RNAct" id="Q9JL25">
    <property type="molecule type" value="protein"/>
</dbReference>
<dbReference type="Bgee" id="ENSMUSG00000026358">
    <property type="expression patterns" value="Expressed in stroma of bone marrow and 46 other cell types or tissues"/>
</dbReference>
<dbReference type="ExpressionAtlas" id="Q9JL25">
    <property type="expression patterns" value="baseline and differential"/>
</dbReference>
<dbReference type="GO" id="GO:0009898">
    <property type="term" value="C:cytoplasmic side of plasma membrane"/>
    <property type="evidence" value="ECO:0000250"/>
    <property type="project" value="UniProtKB"/>
</dbReference>
<dbReference type="GO" id="GO:0005829">
    <property type="term" value="C:cytosol"/>
    <property type="evidence" value="ECO:0000250"/>
    <property type="project" value="UniProtKB"/>
</dbReference>
<dbReference type="GO" id="GO:0005886">
    <property type="term" value="C:plasma membrane"/>
    <property type="evidence" value="ECO:0000304"/>
    <property type="project" value="MGI"/>
</dbReference>
<dbReference type="GO" id="GO:0001965">
    <property type="term" value="F:G-protein alpha-subunit binding"/>
    <property type="evidence" value="ECO:0007669"/>
    <property type="project" value="Ensembl"/>
</dbReference>
<dbReference type="GO" id="GO:0005096">
    <property type="term" value="F:GTPase activator activity"/>
    <property type="evidence" value="ECO:0000250"/>
    <property type="project" value="UniProtKB"/>
</dbReference>
<dbReference type="GO" id="GO:0007186">
    <property type="term" value="P:G protein-coupled receptor signaling pathway"/>
    <property type="evidence" value="ECO:0000250"/>
    <property type="project" value="UniProtKB"/>
</dbReference>
<dbReference type="GO" id="GO:0061737">
    <property type="term" value="P:leukotriene signaling pathway"/>
    <property type="evidence" value="ECO:0000250"/>
    <property type="project" value="UniProtKB"/>
</dbReference>
<dbReference type="GO" id="GO:0009968">
    <property type="term" value="P:negative regulation of signal transduction"/>
    <property type="evidence" value="ECO:0007669"/>
    <property type="project" value="UniProtKB-KW"/>
</dbReference>
<dbReference type="GO" id="GO:0043547">
    <property type="term" value="P:positive regulation of GTPase activity"/>
    <property type="evidence" value="ECO:0000250"/>
    <property type="project" value="UniProtKB"/>
</dbReference>
<dbReference type="GO" id="GO:0009617">
    <property type="term" value="P:response to bacterium"/>
    <property type="evidence" value="ECO:0000270"/>
    <property type="project" value="MGI"/>
</dbReference>
<dbReference type="GO" id="GO:0007165">
    <property type="term" value="P:signal transduction"/>
    <property type="evidence" value="ECO:0000250"/>
    <property type="project" value="UniProtKB"/>
</dbReference>
<dbReference type="FunFam" id="1.10.167.10:FF:000001">
    <property type="entry name" value="Putative regulator of g-protein signaling 12"/>
    <property type="match status" value="1"/>
</dbReference>
<dbReference type="Gene3D" id="1.10.167.10">
    <property type="entry name" value="Regulator of G-protein Signalling 4, domain 2"/>
    <property type="match status" value="1"/>
</dbReference>
<dbReference type="InterPro" id="IPR016137">
    <property type="entry name" value="RGS"/>
</dbReference>
<dbReference type="InterPro" id="IPR036305">
    <property type="entry name" value="RGS_sf"/>
</dbReference>
<dbReference type="InterPro" id="IPR044926">
    <property type="entry name" value="RGS_subdomain_2"/>
</dbReference>
<dbReference type="PANTHER" id="PTHR10845">
    <property type="entry name" value="REGULATOR OF G PROTEIN SIGNALING"/>
    <property type="match status" value="1"/>
</dbReference>
<dbReference type="PANTHER" id="PTHR10845:SF34">
    <property type="entry name" value="REGULATOR OF G-PROTEIN SIGNALING 1"/>
    <property type="match status" value="1"/>
</dbReference>
<dbReference type="Pfam" id="PF00615">
    <property type="entry name" value="RGS"/>
    <property type="match status" value="1"/>
</dbReference>
<dbReference type="PRINTS" id="PR01301">
    <property type="entry name" value="RGSPROTEIN"/>
</dbReference>
<dbReference type="SMART" id="SM00315">
    <property type="entry name" value="RGS"/>
    <property type="match status" value="1"/>
</dbReference>
<dbReference type="SUPFAM" id="SSF48097">
    <property type="entry name" value="Regulator of G-protein signaling, RGS"/>
    <property type="match status" value="1"/>
</dbReference>
<dbReference type="PROSITE" id="PS50132">
    <property type="entry name" value="RGS"/>
    <property type="match status" value="1"/>
</dbReference>
<name>RGS1_MOUSE</name>
<proteinExistence type="evidence at transcript level"/>
<protein>
    <recommendedName>
        <fullName>Regulator of G-protein signaling 1</fullName>
        <shortName>RGS1</shortName>
    </recommendedName>
</protein>